<feature type="chain" id="PRO_1000059635" description="Chaperone protein DnaK">
    <location>
        <begin position="1"/>
        <end position="611"/>
    </location>
</feature>
<feature type="modified residue" description="Phosphothreonine; by autocatalysis" evidence="1">
    <location>
        <position position="199"/>
    </location>
</feature>
<evidence type="ECO:0000255" key="1">
    <source>
        <dbReference type="HAMAP-Rule" id="MF_00332"/>
    </source>
</evidence>
<keyword id="KW-0067">ATP-binding</keyword>
<keyword id="KW-0143">Chaperone</keyword>
<keyword id="KW-0547">Nucleotide-binding</keyword>
<keyword id="KW-0597">Phosphoprotein</keyword>
<keyword id="KW-0346">Stress response</keyword>
<gene>
    <name evidence="1" type="primary">dnaK</name>
    <name type="ordered locus">Pput_4593</name>
</gene>
<organism>
    <name type="scientific">Pseudomonas putida (strain ATCC 700007 / DSM 6899 / JCM 31910 / BCRC 17059 / LMG 24140 / F1)</name>
    <dbReference type="NCBI Taxonomy" id="351746"/>
    <lineage>
        <taxon>Bacteria</taxon>
        <taxon>Pseudomonadati</taxon>
        <taxon>Pseudomonadota</taxon>
        <taxon>Gammaproteobacteria</taxon>
        <taxon>Pseudomonadales</taxon>
        <taxon>Pseudomonadaceae</taxon>
        <taxon>Pseudomonas</taxon>
    </lineage>
</organism>
<comment type="function">
    <text evidence="1">Acts as a chaperone.</text>
</comment>
<comment type="induction">
    <text evidence="1">By stress conditions e.g. heat shock.</text>
</comment>
<comment type="similarity">
    <text evidence="1">Belongs to the heat shock protein 70 family.</text>
</comment>
<dbReference type="EMBL" id="CP000712">
    <property type="protein sequence ID" value="ABQ80713.1"/>
    <property type="molecule type" value="Genomic_DNA"/>
</dbReference>
<dbReference type="SMR" id="A5W9A3"/>
<dbReference type="KEGG" id="ppf:Pput_4593"/>
<dbReference type="eggNOG" id="COG0443">
    <property type="taxonomic scope" value="Bacteria"/>
</dbReference>
<dbReference type="HOGENOM" id="CLU_005965_2_1_6"/>
<dbReference type="GO" id="GO:0005524">
    <property type="term" value="F:ATP binding"/>
    <property type="evidence" value="ECO:0007669"/>
    <property type="project" value="UniProtKB-UniRule"/>
</dbReference>
<dbReference type="GO" id="GO:0140662">
    <property type="term" value="F:ATP-dependent protein folding chaperone"/>
    <property type="evidence" value="ECO:0007669"/>
    <property type="project" value="InterPro"/>
</dbReference>
<dbReference type="GO" id="GO:0051082">
    <property type="term" value="F:unfolded protein binding"/>
    <property type="evidence" value="ECO:0007669"/>
    <property type="project" value="InterPro"/>
</dbReference>
<dbReference type="CDD" id="cd10234">
    <property type="entry name" value="ASKHA_NBD_HSP70_DnaK-like"/>
    <property type="match status" value="1"/>
</dbReference>
<dbReference type="FunFam" id="2.60.34.10:FF:000014">
    <property type="entry name" value="Chaperone protein DnaK HSP70"/>
    <property type="match status" value="1"/>
</dbReference>
<dbReference type="FunFam" id="3.30.30.30:FF:000003">
    <property type="entry name" value="Heat shock protein 9"/>
    <property type="match status" value="1"/>
</dbReference>
<dbReference type="FunFam" id="1.20.1270.10:FF:000001">
    <property type="entry name" value="Molecular chaperone DnaK"/>
    <property type="match status" value="1"/>
</dbReference>
<dbReference type="FunFam" id="3.30.420.40:FF:000004">
    <property type="entry name" value="Molecular chaperone DnaK"/>
    <property type="match status" value="1"/>
</dbReference>
<dbReference type="FunFam" id="3.90.640.10:FF:000003">
    <property type="entry name" value="Molecular chaperone DnaK"/>
    <property type="match status" value="1"/>
</dbReference>
<dbReference type="Gene3D" id="1.20.1270.10">
    <property type="match status" value="1"/>
</dbReference>
<dbReference type="Gene3D" id="3.30.420.40">
    <property type="match status" value="2"/>
</dbReference>
<dbReference type="Gene3D" id="3.90.640.10">
    <property type="entry name" value="Actin, Chain A, domain 4"/>
    <property type="match status" value="1"/>
</dbReference>
<dbReference type="Gene3D" id="2.60.34.10">
    <property type="entry name" value="Substrate Binding Domain Of DNAk, Chain A, domain 1"/>
    <property type="match status" value="1"/>
</dbReference>
<dbReference type="HAMAP" id="MF_00332">
    <property type="entry name" value="DnaK"/>
    <property type="match status" value="1"/>
</dbReference>
<dbReference type="InterPro" id="IPR043129">
    <property type="entry name" value="ATPase_NBD"/>
</dbReference>
<dbReference type="InterPro" id="IPR012725">
    <property type="entry name" value="Chaperone_DnaK"/>
</dbReference>
<dbReference type="InterPro" id="IPR018181">
    <property type="entry name" value="Heat_shock_70_CS"/>
</dbReference>
<dbReference type="InterPro" id="IPR029048">
    <property type="entry name" value="HSP70_C_sf"/>
</dbReference>
<dbReference type="InterPro" id="IPR029047">
    <property type="entry name" value="HSP70_peptide-bd_sf"/>
</dbReference>
<dbReference type="InterPro" id="IPR013126">
    <property type="entry name" value="Hsp_70_fam"/>
</dbReference>
<dbReference type="NCBIfam" id="NF001413">
    <property type="entry name" value="PRK00290.1"/>
    <property type="match status" value="1"/>
</dbReference>
<dbReference type="NCBIfam" id="NF003520">
    <property type="entry name" value="PRK05183.1"/>
    <property type="match status" value="1"/>
</dbReference>
<dbReference type="NCBIfam" id="TIGR02350">
    <property type="entry name" value="prok_dnaK"/>
    <property type="match status" value="1"/>
</dbReference>
<dbReference type="PANTHER" id="PTHR19375">
    <property type="entry name" value="HEAT SHOCK PROTEIN 70KDA"/>
    <property type="match status" value="1"/>
</dbReference>
<dbReference type="Pfam" id="PF00012">
    <property type="entry name" value="HSP70"/>
    <property type="match status" value="1"/>
</dbReference>
<dbReference type="PRINTS" id="PR00301">
    <property type="entry name" value="HEATSHOCK70"/>
</dbReference>
<dbReference type="SUPFAM" id="SSF53067">
    <property type="entry name" value="Actin-like ATPase domain"/>
    <property type="match status" value="2"/>
</dbReference>
<dbReference type="SUPFAM" id="SSF100934">
    <property type="entry name" value="Heat shock protein 70kD (HSP70), C-terminal subdomain"/>
    <property type="match status" value="1"/>
</dbReference>
<dbReference type="SUPFAM" id="SSF100920">
    <property type="entry name" value="Heat shock protein 70kD (HSP70), peptide-binding domain"/>
    <property type="match status" value="1"/>
</dbReference>
<dbReference type="PROSITE" id="PS00297">
    <property type="entry name" value="HSP70_1"/>
    <property type="match status" value="1"/>
</dbReference>
<dbReference type="PROSITE" id="PS00329">
    <property type="entry name" value="HSP70_2"/>
    <property type="match status" value="1"/>
</dbReference>
<dbReference type="PROSITE" id="PS01036">
    <property type="entry name" value="HSP70_3"/>
    <property type="match status" value="1"/>
</dbReference>
<proteinExistence type="inferred from homology"/>
<reference key="1">
    <citation type="submission" date="2007-05" db="EMBL/GenBank/DDBJ databases">
        <title>Complete sequence of Pseudomonas putida F1.</title>
        <authorList>
            <consortium name="US DOE Joint Genome Institute"/>
            <person name="Copeland A."/>
            <person name="Lucas S."/>
            <person name="Lapidus A."/>
            <person name="Barry K."/>
            <person name="Detter J.C."/>
            <person name="Glavina del Rio T."/>
            <person name="Hammon N."/>
            <person name="Israni S."/>
            <person name="Dalin E."/>
            <person name="Tice H."/>
            <person name="Pitluck S."/>
            <person name="Chain P."/>
            <person name="Malfatti S."/>
            <person name="Shin M."/>
            <person name="Vergez L."/>
            <person name="Schmutz J."/>
            <person name="Larimer F."/>
            <person name="Land M."/>
            <person name="Hauser L."/>
            <person name="Kyrpides N."/>
            <person name="Lykidis A."/>
            <person name="Parales R."/>
            <person name="Richardson P."/>
        </authorList>
    </citation>
    <scope>NUCLEOTIDE SEQUENCE [LARGE SCALE GENOMIC DNA]</scope>
    <source>
        <strain>ATCC 700007 / DSM 6899 / JCM 31910 / BCRC 17059 / LMG 24140 / F1</strain>
    </source>
</reference>
<sequence>MGKIIGIDLGTTNSCVSILENGNVKVIENAEGARTTPSIVAYANDGEILVGQSAKRQAVTNPHNTLFAVKRLIGRRFEEDVVQKDIKLVPYKIVKANNGDAWVEAAGKEMAPPQISAEVLKKMKKTAEDYLGEPVTEAVITVPAYFNDSQRQATKDAGRIAGLDVKRIINEPTAAALAYGMDKAKGDHTVIVYDLGGGTFDVSVIEIAEVDGEHQFEVLATNGDTFLGGEDFDMRLIDYLVDEFKKESGMDLKNDPLALQRLKEAAEKAKIELSSAQSTDVNLPYITADATGPKHLNVKISRAKLESLVEDLVKRTIEPCRIALKDAGIDASKIDDVILVGGQTRMPLVQKEVADFFGKEARKDVNPDEAVAMGAAIQGAVLAGDVKDVLLLDVSPLTLGIETMGGVMTALIEKNTTIPTKKSQVFSTADDNQSAVTIHVLQGERKQAAQNKSLGKFDLADIPPAPRGVPQIEVTFDIDANGILHVGAKDKATGKTQSIVIKANSGLSDEEIERMVRDAEANAEEDRKFEELAAARNQGDALVHSTRKMVADAGDKVTAEEKTAIEAAVVALEAAVKGDDKAAIDAKVEELSKVSAPVAQKMYAEQSAEQP</sequence>
<name>DNAK_PSEP1</name>
<accession>A5W9A3</accession>
<protein>
    <recommendedName>
        <fullName evidence="1">Chaperone protein DnaK</fullName>
    </recommendedName>
    <alternativeName>
        <fullName evidence="1">HSP70</fullName>
    </alternativeName>
    <alternativeName>
        <fullName evidence="1">Heat shock 70 kDa protein</fullName>
    </alternativeName>
    <alternativeName>
        <fullName evidence="1">Heat shock protein 70</fullName>
    </alternativeName>
</protein>